<gene>
    <name evidence="1" type="primary">codY</name>
    <name type="ordered locus">SEQ_0459</name>
</gene>
<proteinExistence type="inferred from homology"/>
<comment type="function">
    <text evidence="1">DNA-binding global transcriptional regulator which is involved in the adaptive response to starvation and acts by directly or indirectly controlling the expression of numerous genes in response to nutrient availability. During rapid exponential growth, CodY is highly active and represses genes whose products allow adaptation to nutrient depletion.</text>
</comment>
<comment type="subcellular location">
    <subcellularLocation>
        <location evidence="1">Cytoplasm</location>
    </subcellularLocation>
</comment>
<comment type="similarity">
    <text evidence="1">Belongs to the CodY family.</text>
</comment>
<keyword id="KW-0963">Cytoplasm</keyword>
<keyword id="KW-0238">DNA-binding</keyword>
<keyword id="KW-0678">Repressor</keyword>
<keyword id="KW-0804">Transcription</keyword>
<keyword id="KW-0805">Transcription regulation</keyword>
<protein>
    <recommendedName>
        <fullName evidence="1">Global transcriptional regulator CodY</fullName>
    </recommendedName>
</protein>
<sequence length="260" mass="28848">MPNLLEKTRKITSILQRSVDSLETELPYNTMASRLADIIDCNACIINGGGSLLGYAMKYKTNTDRVEEFFETRQFPDAYVKAASRVYDTEANLSVENELTIFPIESKDIYPDGLTTIAPIYGGGMRLGTLIIWRNDNEFSDDDLVLVEISSTVVGIQLLNLQTENLEETIRKQTVVNMAINTLSYSEMKAVAAILSELDGNEGRLTASVIADRIGITRSVIVNALRKLESAGIIESRSLGMKGTYLKVINEGIFDKLKEF</sequence>
<organism>
    <name type="scientific">Streptococcus equi subsp. equi (strain 4047)</name>
    <dbReference type="NCBI Taxonomy" id="553482"/>
    <lineage>
        <taxon>Bacteria</taxon>
        <taxon>Bacillati</taxon>
        <taxon>Bacillota</taxon>
        <taxon>Bacilli</taxon>
        <taxon>Lactobacillales</taxon>
        <taxon>Streptococcaceae</taxon>
        <taxon>Streptococcus</taxon>
    </lineage>
</organism>
<accession>C0M7E5</accession>
<feature type="chain" id="PRO_1000147208" description="Global transcriptional regulator CodY">
    <location>
        <begin position="1"/>
        <end position="260"/>
    </location>
</feature>
<feature type="DNA-binding region" description="H-T-H motif" evidence="1">
    <location>
        <begin position="207"/>
        <end position="226"/>
    </location>
</feature>
<feature type="region of interest" description="GAF domain" evidence="1">
    <location>
        <begin position="1"/>
        <end position="159"/>
    </location>
</feature>
<name>CODY_STRE4</name>
<reference key="1">
    <citation type="journal article" date="2009" name="PLoS Pathog.">
        <title>Genomic evidence for the evolution of Streptococcus equi: host restriction, increased virulence, and genetic exchange with human pathogens.</title>
        <authorList>
            <person name="Holden M.T.G."/>
            <person name="Heather Z."/>
            <person name="Paillot R."/>
            <person name="Steward K.F."/>
            <person name="Webb K."/>
            <person name="Ainslie F."/>
            <person name="Jourdan T."/>
            <person name="Bason N.C."/>
            <person name="Holroyd N.E."/>
            <person name="Mungall K."/>
            <person name="Quail M.A."/>
            <person name="Sanders M."/>
            <person name="Simmonds M."/>
            <person name="Willey D."/>
            <person name="Brooks K."/>
            <person name="Aanensen D.M."/>
            <person name="Spratt B.G."/>
            <person name="Jolley K.A."/>
            <person name="Maiden M.C.J."/>
            <person name="Kehoe M."/>
            <person name="Chanter N."/>
            <person name="Bentley S.D."/>
            <person name="Robinson C."/>
            <person name="Maskell D.J."/>
            <person name="Parkhill J."/>
            <person name="Waller A.S."/>
        </authorList>
    </citation>
    <scope>NUCLEOTIDE SEQUENCE [LARGE SCALE GENOMIC DNA]</scope>
    <source>
        <strain>4047</strain>
    </source>
</reference>
<evidence type="ECO:0000255" key="1">
    <source>
        <dbReference type="HAMAP-Rule" id="MF_00621"/>
    </source>
</evidence>
<dbReference type="EMBL" id="FM204883">
    <property type="protein sequence ID" value="CAW92648.1"/>
    <property type="molecule type" value="Genomic_DNA"/>
</dbReference>
<dbReference type="RefSeq" id="WP_012679062.1">
    <property type="nucleotide sequence ID" value="NC_012471.1"/>
</dbReference>
<dbReference type="SMR" id="C0M7E5"/>
<dbReference type="KEGG" id="seu:SEQ_0459"/>
<dbReference type="HOGENOM" id="CLU_089581_0_0_9"/>
<dbReference type="OrthoDB" id="2056at2"/>
<dbReference type="Proteomes" id="UP000001365">
    <property type="component" value="Chromosome"/>
</dbReference>
<dbReference type="GO" id="GO:0005737">
    <property type="term" value="C:cytoplasm"/>
    <property type="evidence" value="ECO:0007669"/>
    <property type="project" value="UniProtKB-SubCell"/>
</dbReference>
<dbReference type="GO" id="GO:0003677">
    <property type="term" value="F:DNA binding"/>
    <property type="evidence" value="ECO:0007669"/>
    <property type="project" value="UniProtKB-UniRule"/>
</dbReference>
<dbReference type="GO" id="GO:0003700">
    <property type="term" value="F:DNA-binding transcription factor activity"/>
    <property type="evidence" value="ECO:0007669"/>
    <property type="project" value="InterPro"/>
</dbReference>
<dbReference type="GO" id="GO:0005525">
    <property type="term" value="F:GTP binding"/>
    <property type="evidence" value="ECO:0007669"/>
    <property type="project" value="InterPro"/>
</dbReference>
<dbReference type="GO" id="GO:0045892">
    <property type="term" value="P:negative regulation of DNA-templated transcription"/>
    <property type="evidence" value="ECO:0007669"/>
    <property type="project" value="UniProtKB-UniRule"/>
</dbReference>
<dbReference type="CDD" id="cd00090">
    <property type="entry name" value="HTH_ARSR"/>
    <property type="match status" value="1"/>
</dbReference>
<dbReference type="FunFam" id="1.10.10.10:FF:000034">
    <property type="entry name" value="GTP-sensing transcriptional pleiotropic repressor CodY"/>
    <property type="match status" value="1"/>
</dbReference>
<dbReference type="FunFam" id="3.30.450.40:FF:000003">
    <property type="entry name" value="GTP-sensing transcriptional pleiotropic repressor CodY"/>
    <property type="match status" value="1"/>
</dbReference>
<dbReference type="Gene3D" id="3.30.450.40">
    <property type="match status" value="1"/>
</dbReference>
<dbReference type="Gene3D" id="1.10.10.10">
    <property type="entry name" value="Winged helix-like DNA-binding domain superfamily/Winged helix DNA-binding domain"/>
    <property type="match status" value="1"/>
</dbReference>
<dbReference type="HAMAP" id="MF_00621">
    <property type="entry name" value="HTH_type_CodY"/>
    <property type="match status" value="1"/>
</dbReference>
<dbReference type="InterPro" id="IPR011991">
    <property type="entry name" value="ArsR-like_HTH"/>
</dbReference>
<dbReference type="InterPro" id="IPR014154">
    <property type="entry name" value="CodY"/>
</dbReference>
<dbReference type="InterPro" id="IPR029016">
    <property type="entry name" value="GAF-like_dom_sf"/>
</dbReference>
<dbReference type="InterPro" id="IPR013198">
    <property type="entry name" value="GTP_trans_reg_CodY_C"/>
</dbReference>
<dbReference type="InterPro" id="IPR010312">
    <property type="entry name" value="Transc_reg_CodY_N"/>
</dbReference>
<dbReference type="InterPro" id="IPR036388">
    <property type="entry name" value="WH-like_DNA-bd_sf"/>
</dbReference>
<dbReference type="InterPro" id="IPR036390">
    <property type="entry name" value="WH_DNA-bd_sf"/>
</dbReference>
<dbReference type="NCBIfam" id="TIGR02787">
    <property type="entry name" value="codY_Gpos"/>
    <property type="match status" value="1"/>
</dbReference>
<dbReference type="NCBIfam" id="NF003170">
    <property type="entry name" value="PRK04158.1"/>
    <property type="match status" value="1"/>
</dbReference>
<dbReference type="PANTHER" id="PTHR40062:SF1">
    <property type="entry name" value="GLOBAL TRANSCRIPTIONAL REGULATOR CODY"/>
    <property type="match status" value="1"/>
</dbReference>
<dbReference type="PANTHER" id="PTHR40062">
    <property type="entry name" value="GTP-SENSING TRANSCRIPTIONAL PLEIOTROPIC REPRESSOR CODY"/>
    <property type="match status" value="1"/>
</dbReference>
<dbReference type="Pfam" id="PF06018">
    <property type="entry name" value="CodY"/>
    <property type="match status" value="1"/>
</dbReference>
<dbReference type="Pfam" id="PF08222">
    <property type="entry name" value="HTH_CodY"/>
    <property type="match status" value="1"/>
</dbReference>
<dbReference type="PIRSF" id="PIRSF011572">
    <property type="entry name" value="GTP_sensing_CodY"/>
    <property type="match status" value="1"/>
</dbReference>
<dbReference type="SUPFAM" id="SSF46785">
    <property type="entry name" value="Winged helix' DNA-binding domain"/>
    <property type="match status" value="1"/>
</dbReference>